<accession>P06153</accession>
<accession>P15239</accession>
<name>RPC_BPPH1</name>
<protein>
    <recommendedName>
        <fullName>Immunity repressor protein</fullName>
    </recommendedName>
</protein>
<sequence length="144" mass="16520">MTVGQRIKAIRKERKLTQVQLAEKANLSRSYLADIERDRYNPSLSTLEAVAGALGIQVSAIVGEETLIKEEQAEYNSKEEKDIAKRMEEIRKDLEKSDGLSFSGEPMSQEAVESLMEAMEHIVRQTQRINKKYTPKKYRNDDQE</sequence>
<dbReference type="EMBL" id="X02799">
    <property type="protein sequence ID" value="CAA26567.1"/>
    <property type="status" value="ALT_INIT"/>
    <property type="molecule type" value="Genomic_DNA"/>
</dbReference>
<dbReference type="EMBL" id="M11920">
    <property type="protein sequence ID" value="AAA88396.1"/>
    <property type="molecule type" value="Genomic_DNA"/>
</dbReference>
<dbReference type="PIR" id="A93579">
    <property type="entry name" value="RPBPF5"/>
</dbReference>
<dbReference type="RefSeq" id="NP_690787.1">
    <property type="nucleotide sequence ID" value="NC_004167.1"/>
</dbReference>
<dbReference type="RefSeq" id="YP_009829905.1">
    <property type="nucleotide sequence ID" value="NC_048631.1"/>
</dbReference>
<dbReference type="SMR" id="P06153"/>
<dbReference type="GeneID" id="55599339"/>
<dbReference type="GeneID" id="955201"/>
<dbReference type="KEGG" id="vg:955201"/>
<dbReference type="OrthoDB" id="40030at10239"/>
<dbReference type="GO" id="GO:0003677">
    <property type="term" value="F:DNA binding"/>
    <property type="evidence" value="ECO:0007669"/>
    <property type="project" value="UniProtKB-KW"/>
</dbReference>
<dbReference type="GO" id="GO:0003700">
    <property type="term" value="F:DNA-binding transcription factor activity"/>
    <property type="evidence" value="ECO:0007669"/>
    <property type="project" value="TreeGrafter"/>
</dbReference>
<dbReference type="CDD" id="cd00093">
    <property type="entry name" value="HTH_XRE"/>
    <property type="match status" value="1"/>
</dbReference>
<dbReference type="Gene3D" id="1.10.260.40">
    <property type="entry name" value="lambda repressor-like DNA-binding domains"/>
    <property type="match status" value="1"/>
</dbReference>
<dbReference type="InterPro" id="IPR050807">
    <property type="entry name" value="Bact_TransReg_Diox"/>
</dbReference>
<dbReference type="InterPro" id="IPR001387">
    <property type="entry name" value="Cro/C1-type_HTH"/>
</dbReference>
<dbReference type="InterPro" id="IPR010982">
    <property type="entry name" value="Lambda_DNA-bd_dom_sf"/>
</dbReference>
<dbReference type="PANTHER" id="PTHR46797">
    <property type="entry name" value="HTH-TYPE TRANSCRIPTIONAL REGULATOR"/>
    <property type="match status" value="1"/>
</dbReference>
<dbReference type="PANTHER" id="PTHR46797:SF1">
    <property type="entry name" value="METHYLPHOSPHONATE SYNTHASE"/>
    <property type="match status" value="1"/>
</dbReference>
<dbReference type="Pfam" id="PF01381">
    <property type="entry name" value="HTH_3"/>
    <property type="match status" value="1"/>
</dbReference>
<dbReference type="SMART" id="SM00530">
    <property type="entry name" value="HTH_XRE"/>
    <property type="match status" value="1"/>
</dbReference>
<dbReference type="SUPFAM" id="SSF47413">
    <property type="entry name" value="lambda repressor-like DNA-binding domains"/>
    <property type="match status" value="1"/>
</dbReference>
<dbReference type="PROSITE" id="PS50943">
    <property type="entry name" value="HTH_CROC1"/>
    <property type="match status" value="1"/>
</dbReference>
<comment type="sequence caution" evidence="2">
    <conflict type="erroneous initiation">
        <sequence resource="EMBL-CDS" id="CAA26567"/>
    </conflict>
</comment>
<organismHost>
    <name type="scientific">Bacillus subtilis</name>
    <dbReference type="NCBI Taxonomy" id="1423"/>
</organismHost>
<evidence type="ECO:0000255" key="1">
    <source>
        <dbReference type="PROSITE-ProRule" id="PRU00257"/>
    </source>
</evidence>
<evidence type="ECO:0000305" key="2"/>
<proteinExistence type="evidence at protein level"/>
<reference key="1">
    <citation type="journal article" date="1988" name="EMBO J.">
        <title>Interaction of the Bacillus subtilis phage phi 105 repressor DNA: a genetic analysis.</title>
        <authorList>
            <person name="van Kaer L."/>
            <person name="Gansemans Y."/>
            <person name="van Montagu M."/>
            <person name="Dhaese P."/>
        </authorList>
    </citation>
    <scope>NUCLEOTIDE SEQUENCE [GENOMIC DNA]</scope>
    <scope>PARTIAL PROTEIN SEQUENCE</scope>
</reference>
<reference key="2">
    <citation type="journal article" date="1985" name="Nucleic Acids Res.">
        <title>Nucleotide sequence and mutational analysis of an immunity repressor gene from Bacillus subtilis temperate phage phi 105.</title>
        <authorList>
            <person name="Dhaese P."/>
            <person name="Seurinck J."/>
            <person name="de Smet B."/>
            <person name="van Montagu M."/>
        </authorList>
    </citation>
    <scope>NUCLEOTIDE SEQUENCE [GENOMIC DNA]</scope>
</reference>
<reference key="3">
    <citation type="journal article" date="1985" name="Gene">
        <title>Nucleotide sequence of the immunity region of Bacillus subtilis bacteriophage phi 105: identification of the repressor gene and its mRNA and protein products.</title>
        <authorList>
            <person name="Cully D.F."/>
            <person name="Garro A.J."/>
        </authorList>
    </citation>
    <scope>NUCLEOTIDE SEQUENCE [GENOMIC DNA]</scope>
</reference>
<keyword id="KW-0903">Direct protein sequencing</keyword>
<keyword id="KW-0238">DNA-binding</keyword>
<keyword id="KW-0244">Early protein</keyword>
<keyword id="KW-0678">Repressor</keyword>
<keyword id="KW-0804">Transcription</keyword>
<keyword id="KW-0805">Transcription regulation</keyword>
<feature type="chain" id="PRO_0000149709" description="Immunity repressor protein">
    <location>
        <begin position="1"/>
        <end position="144"/>
    </location>
</feature>
<feature type="domain" description="HTH cro/C1-type" evidence="1">
    <location>
        <begin position="7"/>
        <end position="61"/>
    </location>
</feature>
<feature type="DNA-binding region" description="H-T-H motif" evidence="1">
    <location>
        <begin position="18"/>
        <end position="37"/>
    </location>
</feature>
<organism>
    <name type="scientific">Bacillus phage phi105</name>
    <name type="common">Bacteriophage phi-105</name>
    <dbReference type="NCBI Taxonomy" id="10717"/>
    <lineage>
        <taxon>Viruses</taxon>
        <taxon>Duplodnaviria</taxon>
        <taxon>Heunggongvirae</taxon>
        <taxon>Uroviricota</taxon>
        <taxon>Caudoviricetes</taxon>
        <taxon>Spizizenvirus</taxon>
        <taxon>Spizizenvirus sv105</taxon>
    </lineage>
</organism>